<reference key="1">
    <citation type="journal article" date="2005" name="J. Bacteriol.">
        <title>Whole-genome sequencing of Staphylococcus haemolyticus uncovers the extreme plasticity of its genome and the evolution of human-colonizing staphylococcal species.</title>
        <authorList>
            <person name="Takeuchi F."/>
            <person name="Watanabe S."/>
            <person name="Baba T."/>
            <person name="Yuzawa H."/>
            <person name="Ito T."/>
            <person name="Morimoto Y."/>
            <person name="Kuroda M."/>
            <person name="Cui L."/>
            <person name="Takahashi M."/>
            <person name="Ankai A."/>
            <person name="Baba S."/>
            <person name="Fukui S."/>
            <person name="Lee J.C."/>
            <person name="Hiramatsu K."/>
        </authorList>
    </citation>
    <scope>NUCLEOTIDE SEQUENCE [LARGE SCALE GENOMIC DNA]</scope>
    <source>
        <strain>JCSC1435</strain>
    </source>
</reference>
<keyword id="KW-0326">Glycosidase</keyword>
<keyword id="KW-0378">Hydrolase</keyword>
<keyword id="KW-0964">Secreted</keyword>
<keyword id="KW-0732">Signal</keyword>
<feature type="signal peptide" evidence="2">
    <location>
        <begin position="1"/>
        <end position="26"/>
    </location>
</feature>
<feature type="chain" id="PRO_0000320320" description="Probable transglycosylase SceD">
    <location>
        <begin position="27"/>
        <end position="235"/>
    </location>
</feature>
<feature type="region of interest" description="Disordered" evidence="3">
    <location>
        <begin position="90"/>
        <end position="159"/>
    </location>
</feature>
<feature type="compositionally biased region" description="Polar residues" evidence="3">
    <location>
        <begin position="99"/>
        <end position="110"/>
    </location>
</feature>
<feature type="compositionally biased region" description="Low complexity" evidence="3">
    <location>
        <begin position="111"/>
        <end position="159"/>
    </location>
</feature>
<name>SCED_STAHJ</name>
<dbReference type="EC" id="3.2.-.-"/>
<dbReference type="EMBL" id="AP006716">
    <property type="protein sequence ID" value="BAE04248.1"/>
    <property type="molecule type" value="Genomic_DNA"/>
</dbReference>
<dbReference type="RefSeq" id="WP_011275250.1">
    <property type="nucleotide sequence ID" value="NC_007168.1"/>
</dbReference>
<dbReference type="SMR" id="Q4L7X7"/>
<dbReference type="CAZy" id="GH23">
    <property type="family name" value="Glycoside Hydrolase Family 23"/>
</dbReference>
<dbReference type="KEGG" id="sha:SH0939"/>
<dbReference type="eggNOG" id="COG1388">
    <property type="taxonomic scope" value="Bacteria"/>
</dbReference>
<dbReference type="HOGENOM" id="CLU_099865_0_0_9"/>
<dbReference type="OrthoDB" id="2314263at2"/>
<dbReference type="Proteomes" id="UP000000543">
    <property type="component" value="Chromosome"/>
</dbReference>
<dbReference type="GO" id="GO:0005576">
    <property type="term" value="C:extracellular region"/>
    <property type="evidence" value="ECO:0007669"/>
    <property type="project" value="UniProtKB-SubCell"/>
</dbReference>
<dbReference type="GO" id="GO:0016798">
    <property type="term" value="F:hydrolase activity, acting on glycosyl bonds"/>
    <property type="evidence" value="ECO:0007669"/>
    <property type="project" value="UniProtKB-KW"/>
</dbReference>
<dbReference type="CDD" id="cd13925">
    <property type="entry name" value="RPF"/>
    <property type="match status" value="1"/>
</dbReference>
<dbReference type="Gene3D" id="1.10.530.10">
    <property type="match status" value="1"/>
</dbReference>
<dbReference type="InterPro" id="IPR023346">
    <property type="entry name" value="Lysozyme-like_dom_sf"/>
</dbReference>
<dbReference type="InterPro" id="IPR010618">
    <property type="entry name" value="RPF"/>
</dbReference>
<dbReference type="Pfam" id="PF06737">
    <property type="entry name" value="Transglycosylas"/>
    <property type="match status" value="1"/>
</dbReference>
<dbReference type="SUPFAM" id="SSF53955">
    <property type="entry name" value="Lysozyme-like"/>
    <property type="match status" value="1"/>
</dbReference>
<sequence>MKKTIIASSLAVGLGVVAGNAGHADASEAQVNKAELAQLAQSNDQSLNDSPIQEGAYNVTFDYEGFTYHFESDGTNWSWNYAQSGQASQQQDVSAQASTVSNQTSAEQVGSQQQSSQAQPTQTQQAPQTEQTQQPQTEATTSNSSSSNNNASSGSSVNVNSHLQQIAQRESGGDITAINPSSGAAGKYQFLQSTWDSVAPDEYKGVSPAQAPEDVQDAAAVKLYNTAGASQWVTA</sequence>
<gene>
    <name type="primary">sceD</name>
    <name type="ordered locus">SH0939</name>
</gene>
<organism>
    <name type="scientific">Staphylococcus haemolyticus (strain JCSC1435)</name>
    <dbReference type="NCBI Taxonomy" id="279808"/>
    <lineage>
        <taxon>Bacteria</taxon>
        <taxon>Bacillati</taxon>
        <taxon>Bacillota</taxon>
        <taxon>Bacilli</taxon>
        <taxon>Bacillales</taxon>
        <taxon>Staphylococcaceae</taxon>
        <taxon>Staphylococcus</taxon>
    </lineage>
</organism>
<accession>Q4L7X7</accession>
<proteinExistence type="inferred from homology"/>
<protein>
    <recommendedName>
        <fullName>Probable transglycosylase SceD</fullName>
        <ecNumber>3.2.-.-</ecNumber>
    </recommendedName>
</protein>
<comment type="function">
    <text evidence="1">Is able to cleave peptidoglycan and affects clumping and separation of bacterial cells.</text>
</comment>
<comment type="subcellular location">
    <subcellularLocation>
        <location evidence="1">Secreted</location>
    </subcellularLocation>
</comment>
<comment type="similarity">
    <text evidence="4">Belongs to the transglycosylase family. SceD subfamily.</text>
</comment>
<evidence type="ECO:0000250" key="1"/>
<evidence type="ECO:0000255" key="2"/>
<evidence type="ECO:0000256" key="3">
    <source>
        <dbReference type="SAM" id="MobiDB-lite"/>
    </source>
</evidence>
<evidence type="ECO:0000305" key="4"/>